<sequence length="290" mass="31169">MEFEAEHEGLTASWVAPAPQGGKGAEGRAGVADEAGHGKTEAECAEDGEKCGDAEMSALDRVQRDRWRFSSPPPHSGVTGKGAIPIKGDGKAIECQELTGEGEWLSQWEELPPEPRRSGNEHLDESRYAKQTERGSSTGKEEGDGMKQMGELAQQCEGGTYADLLVEAEQAVVHSVRALMLAERQNPNILGEHLNKKRVLVQRPRTILSVESENATMRSYMLVTLICSAKSLLLGSCMSFFAGMLVGRTADVKTPLWDTVCLLMAFCAGIVVGGVDSGEVESGETKSESN</sequence>
<reference key="1">
    <citation type="journal article" date="1992" name="J. Virol.">
        <title>Identification of a unique Marek's disease virus gene which encodes a 38-kilodalton phosphoprotein and is expressed in both lytically infected cells and latently infected lymphoblastoid tumor cells.</title>
        <authorList>
            <person name="Chen X."/>
            <person name="Sondermeijer P.J.A."/>
            <person name="Velicer L.F."/>
        </authorList>
    </citation>
    <scope>NUCLEOTIDE SEQUENCE [GENOMIC DNA]</scope>
</reference>
<protein>
    <recommendedName>
        <fullName>38 kDa phosphoprotein</fullName>
    </recommendedName>
    <alternativeName>
        <fullName>Phosphoprotein pp38</fullName>
    </alternativeName>
</protein>
<proteinExistence type="predicted"/>
<evidence type="ECO:0000255" key="1"/>
<evidence type="ECO:0000256" key="2">
    <source>
        <dbReference type="SAM" id="MobiDB-lite"/>
    </source>
</evidence>
<evidence type="ECO:0000305" key="3"/>
<gene>
    <name type="primary">PP38</name>
</gene>
<name>VP38_GAHVG</name>
<organismHost>
    <name type="scientific">Gallus gallus</name>
    <name type="common">Chicken</name>
    <dbReference type="NCBI Taxonomy" id="9031"/>
</organismHost>
<dbReference type="EMBL" id="M73484">
    <property type="protein sequence ID" value="AAA46112.1"/>
    <property type="molecule type" value="Genomic_DNA"/>
</dbReference>
<dbReference type="SMR" id="P68347"/>
<dbReference type="GO" id="GO:0016020">
    <property type="term" value="C:membrane"/>
    <property type="evidence" value="ECO:0007669"/>
    <property type="project" value="UniProtKB-SubCell"/>
</dbReference>
<dbReference type="InterPro" id="IPR006930">
    <property type="entry name" value="Herpes_pp38"/>
</dbReference>
<dbReference type="Pfam" id="PF04846">
    <property type="entry name" value="Herpes_pp38"/>
    <property type="match status" value="1"/>
</dbReference>
<accession>P68347</accession>
<accession>P30023</accession>
<accession>P31633</accession>
<feature type="chain" id="PRO_0000116335" description="38 kDa phosphoprotein">
    <location>
        <begin position="1"/>
        <end position="290"/>
    </location>
</feature>
<feature type="transmembrane region" description="Helical" evidence="1">
    <location>
        <begin position="226"/>
        <end position="246"/>
    </location>
</feature>
<feature type="transmembrane region" description="Helical" evidence="1">
    <location>
        <begin position="255"/>
        <end position="275"/>
    </location>
</feature>
<feature type="region of interest" description="Disordered" evidence="2">
    <location>
        <begin position="1"/>
        <end position="49"/>
    </location>
</feature>
<feature type="region of interest" description="Disordered" evidence="2">
    <location>
        <begin position="67"/>
        <end position="87"/>
    </location>
</feature>
<feature type="region of interest" description="Disordered" evidence="2">
    <location>
        <begin position="111"/>
        <end position="146"/>
    </location>
</feature>
<feature type="compositionally biased region" description="Basic and acidic residues" evidence="2">
    <location>
        <begin position="34"/>
        <end position="49"/>
    </location>
</feature>
<feature type="compositionally biased region" description="Basic and acidic residues" evidence="2">
    <location>
        <begin position="113"/>
        <end position="145"/>
    </location>
</feature>
<keyword id="KW-0472">Membrane</keyword>
<keyword id="KW-0597">Phosphoprotein</keyword>
<keyword id="KW-0812">Transmembrane</keyword>
<keyword id="KW-1133">Transmembrane helix</keyword>
<organism>
    <name type="scientific">Gallid herpesvirus 2 (strain GA)</name>
    <name type="common">GaHV-2</name>
    <name type="synonym">Marek's disease herpesvirus type 1</name>
    <dbReference type="NCBI Taxonomy" id="10388"/>
    <lineage>
        <taxon>Viruses</taxon>
        <taxon>Duplodnaviria</taxon>
        <taxon>Heunggongvirae</taxon>
        <taxon>Peploviricota</taxon>
        <taxon>Herviviricetes</taxon>
        <taxon>Herpesvirales</taxon>
        <taxon>Orthoherpesviridae</taxon>
        <taxon>Alphaherpesvirinae</taxon>
        <taxon>Mardivirus</taxon>
        <taxon>Mardivirus gallidalpha2</taxon>
        <taxon>Gallid alphaherpesvirus 2</taxon>
    </lineage>
</organism>
<comment type="subcellular location">
    <subcellularLocation>
        <location evidence="3">Membrane</location>
        <topology evidence="3">Multi-pass membrane protein</topology>
    </subcellularLocation>
</comment>
<comment type="PTM">
    <text>Phosphorylated.</text>
</comment>
<comment type="miscellaneous">
    <text>Expressed in both lytically infected cells and latently infected lymphoblastoid tumor cells.</text>
</comment>